<organism>
    <name type="scientific">Mus musculus</name>
    <name type="common">Mouse</name>
    <dbReference type="NCBI Taxonomy" id="10090"/>
    <lineage>
        <taxon>Eukaryota</taxon>
        <taxon>Metazoa</taxon>
        <taxon>Chordata</taxon>
        <taxon>Craniata</taxon>
        <taxon>Vertebrata</taxon>
        <taxon>Euteleostomi</taxon>
        <taxon>Mammalia</taxon>
        <taxon>Eutheria</taxon>
        <taxon>Euarchontoglires</taxon>
        <taxon>Glires</taxon>
        <taxon>Rodentia</taxon>
        <taxon>Myomorpha</taxon>
        <taxon>Muroidea</taxon>
        <taxon>Muridae</taxon>
        <taxon>Murinae</taxon>
        <taxon>Mus</taxon>
        <taxon>Mus</taxon>
    </lineage>
</organism>
<sequence>MRRNWLLILTLFLLMFIEKYESTVSLTAPPTVKLENGSSTNVDITLGHPLNSTLVITFEVTFRSKNLTIVELPDEVIVPRGEKNASFQVTSQNIGQVTVFLHGNHSNQTCPRIRFLVIHSRIVSIINQVIGWIYFMAWSVSFYPQVIQNWRRKSVIGLSFDFLALNLTGFVAYSVFNIGLLWVPYIQEEFLLKYPNGVNPVDSNDAFFSLHAVALTLIVILQCCLYERGNQRVSWPSIGFLVLAWLFVLVTMIVAAVGITTWLQFLFCFSYIKLIITLIKYFPQAYMNFYYKSTKGWSIGGVLLDFTGGSFSLLQMFLQSYNNDQWTLIFGDPTKFGLGVFTIFFDVVFFIQHFYLYRKKPGYDQLN</sequence>
<proteinExistence type="evidence at protein level"/>
<accession>P57757</accession>
<comment type="function">
    <text evidence="3 7 8 9">Cystine/H(+) symporter that mediates export of cystine, the oxidized dimer of cysteine, from lysosomes (PubMed:12370309). Plays an important role in melanin synthesis by catalyzing cystine export from melanosomes, possibly by inhibiting pheomelanin synthesis (PubMed:22649030). In addition to cystine export, also acts as a positive regulator of mTORC1 signaling in kidney proximal tubular cells, via interactions with components of the v-ATPase and Ragulator complexes (PubMed:26449607). Also involved in small GTPase-regulated vesicle trafficking and lysosomal localization of LAMP2A, independently of cystine transporter activity (PubMed:28465352).</text>
</comment>
<comment type="catalytic activity">
    <reaction evidence="1">
        <text>L-cystine(out) + H(+)(out) = L-cystine(in) + H(+)(in)</text>
        <dbReference type="Rhea" id="RHEA:66172"/>
        <dbReference type="ChEBI" id="CHEBI:15378"/>
        <dbReference type="ChEBI" id="CHEBI:35491"/>
    </reaction>
    <physiologicalReaction direction="left-to-right" evidence="1">
        <dbReference type="Rhea" id="RHEA:66173"/>
    </physiologicalReaction>
</comment>
<comment type="activity regulation">
    <text evidence="1">Switches between a lumen- and a cytosol-open conformation: pH induces conformational changes and shifts the equilibrium to facilitate the transition between the lumen- and cytosol-open conformation, thereby promoting cystine transport. Protonation of specific aspartate residues (Asp-205, Asp-305 and Asp-346) favors the cytosol-open conformation.</text>
</comment>
<comment type="subunit">
    <text evidence="1 8">Interacts with components of the V-ATPase complex (PubMed:26449607). Interacts with components of the Ragulator complex (PubMed:26449607). Interacts with RRAGA/RagA and RRAGC/RagC (PubMed:26449607). Interacts with AP-3 complex subunit mu (AP3M1 or AP3M2) (By similarity).</text>
</comment>
<comment type="subcellular location">
    <subcellularLocation>
        <location evidence="3">Lysosome membrane</location>
        <topology evidence="2">Multi-pass membrane protein</topology>
    </subcellularLocation>
    <subcellularLocation>
        <location evidence="1">Melanosome membrane</location>
        <topology evidence="2">Multi-pass membrane protein</topology>
    </subcellularLocation>
    <text evidence="1">AP-3 complex is required for localization to the lysosome.</text>
</comment>
<comment type="domain">
    <text evidence="1">The lysosomal targeting motif, together with te second PQ-loop mediate targeting to the lysosome.</text>
</comment>
<comment type="disruption phenotype">
    <text evidence="3 4 6 7 8">Mice develop ocular damages, bone defects and behavioral anomalies (PubMed:12370309). Defects are caused by cystine accumulation in all organs tested, and formation of cystine crystals (PubMed:12370309). Mice do not develop signs of a proximal tubulopathy or renal failure (PubMed:12370309). Cystine accumulation in the central nervous system causes severe age-related memory deficits: spatial reference and working memory deficits are observed in middle-aged mice (PubMed:17977621). In eyes, cystine crystals induce inflammatory and immune response with aging associated with loss of keratocyte and endothelial cells (PubMed:21897743). Mice show a strong increase in hair pheomelanin content (PubMed:22649030). Decreased mTORC1 signaling pathway in proximal tubular cell lines (PubMed:26449607).</text>
</comment>
<comment type="similarity">
    <text evidence="11">Belongs to the cystinosin family.</text>
</comment>
<dbReference type="EMBL" id="AJ250670">
    <property type="protein sequence ID" value="CAC19455.1"/>
    <property type="molecule type" value="mRNA"/>
</dbReference>
<dbReference type="EMBL" id="AK078511">
    <property type="protein sequence ID" value="BAC37316.1"/>
    <property type="molecule type" value="mRNA"/>
</dbReference>
<dbReference type="EMBL" id="BC005479">
    <property type="protein sequence ID" value="AAH05479.1"/>
    <property type="molecule type" value="mRNA"/>
</dbReference>
<dbReference type="CCDS" id="CCDS25001.1"/>
<dbReference type="RefSeq" id="NP_001344820.1">
    <property type="nucleotide sequence ID" value="NM_001357891.1"/>
</dbReference>
<dbReference type="RefSeq" id="NP_001344821.1">
    <property type="nucleotide sequence ID" value="NM_001357892.1"/>
</dbReference>
<dbReference type="RefSeq" id="NP_112541.1">
    <property type="nucleotide sequence ID" value="NM_031251.4"/>
</dbReference>
<dbReference type="RefSeq" id="XP_006534596.1">
    <property type="nucleotide sequence ID" value="XM_006534533.3"/>
</dbReference>
<dbReference type="RefSeq" id="XP_006534597.1">
    <property type="nucleotide sequence ID" value="XM_006534534.3"/>
</dbReference>
<dbReference type="SMR" id="P57757"/>
<dbReference type="FunCoup" id="P57757">
    <property type="interactions" value="1938"/>
</dbReference>
<dbReference type="STRING" id="10090.ENSMUSP00000104116"/>
<dbReference type="GlyCosmos" id="P57757">
    <property type="glycosylation" value="6 sites, No reported glycans"/>
</dbReference>
<dbReference type="GlyGen" id="P57757">
    <property type="glycosylation" value="6 sites, 1 N-linked glycan (1 site)"/>
</dbReference>
<dbReference type="iPTMnet" id="P57757"/>
<dbReference type="PhosphoSitePlus" id="P57757"/>
<dbReference type="PaxDb" id="10090-ENSMUSP00000006103"/>
<dbReference type="ProteomicsDB" id="284146"/>
<dbReference type="Antibodypedia" id="23081">
    <property type="antibodies" value="198 antibodies from 27 providers"/>
</dbReference>
<dbReference type="DNASU" id="83429"/>
<dbReference type="Ensembl" id="ENSMUST00000006103.9">
    <property type="protein sequence ID" value="ENSMUSP00000006103.3"/>
    <property type="gene ID" value="ENSMUSG00000005949.10"/>
</dbReference>
<dbReference type="Ensembl" id="ENSMUST00000108476.8">
    <property type="protein sequence ID" value="ENSMUSP00000104116.2"/>
    <property type="gene ID" value="ENSMUSG00000005949.10"/>
</dbReference>
<dbReference type="GeneID" id="83429"/>
<dbReference type="KEGG" id="mmu:83429"/>
<dbReference type="UCSC" id="uc007kae.1">
    <property type="organism name" value="mouse"/>
</dbReference>
<dbReference type="AGR" id="MGI:1932872"/>
<dbReference type="CTD" id="1497"/>
<dbReference type="MGI" id="MGI:1932872">
    <property type="gene designation" value="Ctns"/>
</dbReference>
<dbReference type="VEuPathDB" id="HostDB:ENSMUSG00000005949"/>
<dbReference type="eggNOG" id="KOG3145">
    <property type="taxonomic scope" value="Eukaryota"/>
</dbReference>
<dbReference type="GeneTree" id="ENSGT00390000005338"/>
<dbReference type="HOGENOM" id="CLU_046327_1_0_1"/>
<dbReference type="InParanoid" id="P57757"/>
<dbReference type="OMA" id="WIDVIYT"/>
<dbReference type="OrthoDB" id="75720at2759"/>
<dbReference type="PhylomeDB" id="P57757"/>
<dbReference type="TreeFam" id="TF313589"/>
<dbReference type="Reactome" id="R-MMU-425393">
    <property type="pathway name" value="Transport of inorganic cations/anions and amino acids/oligopeptides"/>
</dbReference>
<dbReference type="Reactome" id="R-MMU-5223345">
    <property type="pathway name" value="Miscellaneous transport and binding events"/>
</dbReference>
<dbReference type="BioGRID-ORCS" id="83429">
    <property type="hits" value="3 hits in 78 CRISPR screens"/>
</dbReference>
<dbReference type="ChiTaRS" id="Ctns">
    <property type="organism name" value="mouse"/>
</dbReference>
<dbReference type="PRO" id="PR:P57757"/>
<dbReference type="Proteomes" id="UP000000589">
    <property type="component" value="Chromosome 11"/>
</dbReference>
<dbReference type="RNAct" id="P57757">
    <property type="molecule type" value="protein"/>
</dbReference>
<dbReference type="Bgee" id="ENSMUSG00000005949">
    <property type="expression patterns" value="Expressed in lip and 173 other cell types or tissues"/>
</dbReference>
<dbReference type="ExpressionAtlas" id="P57757">
    <property type="expression patterns" value="baseline and differential"/>
</dbReference>
<dbReference type="GO" id="GO:0005770">
    <property type="term" value="C:late endosome"/>
    <property type="evidence" value="ECO:0007669"/>
    <property type="project" value="Ensembl"/>
</dbReference>
<dbReference type="GO" id="GO:0005765">
    <property type="term" value="C:lysosomal membrane"/>
    <property type="evidence" value="ECO:0000250"/>
    <property type="project" value="UniProtKB"/>
</dbReference>
<dbReference type="GO" id="GO:0005764">
    <property type="term" value="C:lysosome"/>
    <property type="evidence" value="ECO:0000314"/>
    <property type="project" value="MGI"/>
</dbReference>
<dbReference type="GO" id="GO:0042470">
    <property type="term" value="C:melanosome"/>
    <property type="evidence" value="ECO:0000250"/>
    <property type="project" value="UniProtKB"/>
</dbReference>
<dbReference type="GO" id="GO:0033162">
    <property type="term" value="C:melanosome membrane"/>
    <property type="evidence" value="ECO:0007669"/>
    <property type="project" value="UniProtKB-SubCell"/>
</dbReference>
<dbReference type="GO" id="GO:0005886">
    <property type="term" value="C:plasma membrane"/>
    <property type="evidence" value="ECO:0000266"/>
    <property type="project" value="MGI"/>
</dbReference>
<dbReference type="GO" id="GO:0015184">
    <property type="term" value="F:L-cystine transmembrane transporter activity"/>
    <property type="evidence" value="ECO:0000314"/>
    <property type="project" value="MGI"/>
</dbReference>
<dbReference type="GO" id="GO:0015295">
    <property type="term" value="F:solute:proton symporter activity"/>
    <property type="evidence" value="ECO:0000250"/>
    <property type="project" value="UniProtKB"/>
</dbReference>
<dbReference type="GO" id="GO:0007628">
    <property type="term" value="P:adult walking behavior"/>
    <property type="evidence" value="ECO:0000315"/>
    <property type="project" value="MGI"/>
</dbReference>
<dbReference type="GO" id="GO:0046034">
    <property type="term" value="P:ATP metabolic process"/>
    <property type="evidence" value="ECO:0007669"/>
    <property type="project" value="Ensembl"/>
</dbReference>
<dbReference type="GO" id="GO:0007420">
    <property type="term" value="P:brain development"/>
    <property type="evidence" value="ECO:0007669"/>
    <property type="project" value="Ensembl"/>
</dbReference>
<dbReference type="GO" id="GO:0006749">
    <property type="term" value="P:glutathione metabolic process"/>
    <property type="evidence" value="ECO:0007669"/>
    <property type="project" value="Ensembl"/>
</dbReference>
<dbReference type="GO" id="GO:0007625">
    <property type="term" value="P:grooming behavior"/>
    <property type="evidence" value="ECO:0000315"/>
    <property type="project" value="MGI"/>
</dbReference>
<dbReference type="GO" id="GO:0015811">
    <property type="term" value="P:L-cystine transport"/>
    <property type="evidence" value="ECO:0000314"/>
    <property type="project" value="MGI"/>
</dbReference>
<dbReference type="GO" id="GO:0002088">
    <property type="term" value="P:lens development in camera-type eye"/>
    <property type="evidence" value="ECO:0000315"/>
    <property type="project" value="MGI"/>
</dbReference>
<dbReference type="GO" id="GO:0007616">
    <property type="term" value="P:long-term memory"/>
    <property type="evidence" value="ECO:0000315"/>
    <property type="project" value="MGI"/>
</dbReference>
<dbReference type="GO" id="GO:0042438">
    <property type="term" value="P:melanin biosynthetic process"/>
    <property type="evidence" value="ECO:0007669"/>
    <property type="project" value="UniProtKB-KW"/>
</dbReference>
<dbReference type="GO" id="GO:1904263">
    <property type="term" value="P:positive regulation of TORC1 signaling"/>
    <property type="evidence" value="ECO:0000315"/>
    <property type="project" value="UniProtKB"/>
</dbReference>
<dbReference type="GO" id="GO:0015031">
    <property type="term" value="P:protein transport"/>
    <property type="evidence" value="ECO:0007669"/>
    <property type="project" value="UniProtKB-KW"/>
</dbReference>
<dbReference type="GO" id="GO:0048021">
    <property type="term" value="P:regulation of melanin biosynthetic process"/>
    <property type="evidence" value="ECO:0000250"/>
    <property type="project" value="UniProtKB"/>
</dbReference>
<dbReference type="GO" id="GO:0008542">
    <property type="term" value="P:visual learning"/>
    <property type="evidence" value="ECO:0000315"/>
    <property type="project" value="MGI"/>
</dbReference>
<dbReference type="FunFam" id="1.20.1280.290:FF:000016">
    <property type="entry name" value="Cystinosin homolog"/>
    <property type="match status" value="1"/>
</dbReference>
<dbReference type="FunFam" id="1.20.1280.290:FF:000015">
    <property type="entry name" value="cystinosin isoform X2"/>
    <property type="match status" value="1"/>
</dbReference>
<dbReference type="Gene3D" id="1.20.1280.290">
    <property type="match status" value="1"/>
</dbReference>
<dbReference type="InterPro" id="IPR005282">
    <property type="entry name" value="LC_transporter"/>
</dbReference>
<dbReference type="InterPro" id="IPR006603">
    <property type="entry name" value="PQ-loop_rpt"/>
</dbReference>
<dbReference type="NCBIfam" id="TIGR00951">
    <property type="entry name" value="2A43"/>
    <property type="match status" value="1"/>
</dbReference>
<dbReference type="PANTHER" id="PTHR13131">
    <property type="entry name" value="CYSTINOSIN"/>
    <property type="match status" value="1"/>
</dbReference>
<dbReference type="PANTHER" id="PTHR13131:SF5">
    <property type="entry name" value="CYSTINOSIN"/>
    <property type="match status" value="1"/>
</dbReference>
<dbReference type="Pfam" id="PF04193">
    <property type="entry name" value="PQ-loop"/>
    <property type="match status" value="2"/>
</dbReference>
<dbReference type="SMART" id="SM00679">
    <property type="entry name" value="CTNS"/>
    <property type="match status" value="2"/>
</dbReference>
<protein>
    <recommendedName>
        <fullName evidence="10">Cystinosin</fullName>
    </recommendedName>
</protein>
<gene>
    <name evidence="10 12" type="primary">Ctns</name>
</gene>
<keyword id="KW-0325">Glycoprotein</keyword>
<keyword id="KW-0458">Lysosome</keyword>
<keyword id="KW-0470">Melanin biosynthesis</keyword>
<keyword id="KW-0472">Membrane</keyword>
<keyword id="KW-0653">Protein transport</keyword>
<keyword id="KW-1185">Reference proteome</keyword>
<keyword id="KW-0677">Repeat</keyword>
<keyword id="KW-0732">Signal</keyword>
<keyword id="KW-0769">Symport</keyword>
<keyword id="KW-0812">Transmembrane</keyword>
<keyword id="KW-1133">Transmembrane helix</keyword>
<keyword id="KW-0813">Transport</keyword>
<name>CTNS_MOUSE</name>
<evidence type="ECO:0000250" key="1">
    <source>
        <dbReference type="UniProtKB" id="O60931"/>
    </source>
</evidence>
<evidence type="ECO:0000255" key="2"/>
<evidence type="ECO:0000269" key="3">
    <source>
    </source>
</evidence>
<evidence type="ECO:0000269" key="4">
    <source>
    </source>
</evidence>
<evidence type="ECO:0000269" key="5">
    <source>
    </source>
</evidence>
<evidence type="ECO:0000269" key="6">
    <source>
    </source>
</evidence>
<evidence type="ECO:0000269" key="7">
    <source>
    </source>
</evidence>
<evidence type="ECO:0000269" key="8">
    <source>
    </source>
</evidence>
<evidence type="ECO:0000269" key="9">
    <source>
    </source>
</evidence>
<evidence type="ECO:0000303" key="10">
    <source>
    </source>
</evidence>
<evidence type="ECO:0000305" key="11"/>
<evidence type="ECO:0000312" key="12">
    <source>
        <dbReference type="MGI" id="MGI:1932872"/>
    </source>
</evidence>
<reference key="1">
    <citation type="journal article" date="2000" name="BMC Genomics">
        <title>Identification and characterisation of the murine homologue of the gene responsible for cystinosis, Ctns.</title>
        <authorList>
            <person name="Cherqui S."/>
            <person name="Kalatzis V."/>
            <person name="Forestier L."/>
            <person name="Poras I."/>
            <person name="Antignac C."/>
        </authorList>
    </citation>
    <scope>NUCLEOTIDE SEQUENCE [MRNA]</scope>
</reference>
<reference key="2">
    <citation type="journal article" date="2005" name="Science">
        <title>The transcriptional landscape of the mammalian genome.</title>
        <authorList>
            <person name="Carninci P."/>
            <person name="Kasukawa T."/>
            <person name="Katayama S."/>
            <person name="Gough J."/>
            <person name="Frith M.C."/>
            <person name="Maeda N."/>
            <person name="Oyama R."/>
            <person name="Ravasi T."/>
            <person name="Lenhard B."/>
            <person name="Wells C."/>
            <person name="Kodzius R."/>
            <person name="Shimokawa K."/>
            <person name="Bajic V.B."/>
            <person name="Brenner S.E."/>
            <person name="Batalov S."/>
            <person name="Forrest A.R."/>
            <person name="Zavolan M."/>
            <person name="Davis M.J."/>
            <person name="Wilming L.G."/>
            <person name="Aidinis V."/>
            <person name="Allen J.E."/>
            <person name="Ambesi-Impiombato A."/>
            <person name="Apweiler R."/>
            <person name="Aturaliya R.N."/>
            <person name="Bailey T.L."/>
            <person name="Bansal M."/>
            <person name="Baxter L."/>
            <person name="Beisel K.W."/>
            <person name="Bersano T."/>
            <person name="Bono H."/>
            <person name="Chalk A.M."/>
            <person name="Chiu K.P."/>
            <person name="Choudhary V."/>
            <person name="Christoffels A."/>
            <person name="Clutterbuck D.R."/>
            <person name="Crowe M.L."/>
            <person name="Dalla E."/>
            <person name="Dalrymple B.P."/>
            <person name="de Bono B."/>
            <person name="Della Gatta G."/>
            <person name="di Bernardo D."/>
            <person name="Down T."/>
            <person name="Engstrom P."/>
            <person name="Fagiolini M."/>
            <person name="Faulkner G."/>
            <person name="Fletcher C.F."/>
            <person name="Fukushima T."/>
            <person name="Furuno M."/>
            <person name="Futaki S."/>
            <person name="Gariboldi M."/>
            <person name="Georgii-Hemming P."/>
            <person name="Gingeras T.R."/>
            <person name="Gojobori T."/>
            <person name="Green R.E."/>
            <person name="Gustincich S."/>
            <person name="Harbers M."/>
            <person name="Hayashi Y."/>
            <person name="Hensch T.K."/>
            <person name="Hirokawa N."/>
            <person name="Hill D."/>
            <person name="Huminiecki L."/>
            <person name="Iacono M."/>
            <person name="Ikeo K."/>
            <person name="Iwama A."/>
            <person name="Ishikawa T."/>
            <person name="Jakt M."/>
            <person name="Kanapin A."/>
            <person name="Katoh M."/>
            <person name="Kawasawa Y."/>
            <person name="Kelso J."/>
            <person name="Kitamura H."/>
            <person name="Kitano H."/>
            <person name="Kollias G."/>
            <person name="Krishnan S.P."/>
            <person name="Kruger A."/>
            <person name="Kummerfeld S.K."/>
            <person name="Kurochkin I.V."/>
            <person name="Lareau L.F."/>
            <person name="Lazarevic D."/>
            <person name="Lipovich L."/>
            <person name="Liu J."/>
            <person name="Liuni S."/>
            <person name="McWilliam S."/>
            <person name="Madan Babu M."/>
            <person name="Madera M."/>
            <person name="Marchionni L."/>
            <person name="Matsuda H."/>
            <person name="Matsuzawa S."/>
            <person name="Miki H."/>
            <person name="Mignone F."/>
            <person name="Miyake S."/>
            <person name="Morris K."/>
            <person name="Mottagui-Tabar S."/>
            <person name="Mulder N."/>
            <person name="Nakano N."/>
            <person name="Nakauchi H."/>
            <person name="Ng P."/>
            <person name="Nilsson R."/>
            <person name="Nishiguchi S."/>
            <person name="Nishikawa S."/>
            <person name="Nori F."/>
            <person name="Ohara O."/>
            <person name="Okazaki Y."/>
            <person name="Orlando V."/>
            <person name="Pang K.C."/>
            <person name="Pavan W.J."/>
            <person name="Pavesi G."/>
            <person name="Pesole G."/>
            <person name="Petrovsky N."/>
            <person name="Piazza S."/>
            <person name="Reed J."/>
            <person name="Reid J.F."/>
            <person name="Ring B.Z."/>
            <person name="Ringwald M."/>
            <person name="Rost B."/>
            <person name="Ruan Y."/>
            <person name="Salzberg S.L."/>
            <person name="Sandelin A."/>
            <person name="Schneider C."/>
            <person name="Schoenbach C."/>
            <person name="Sekiguchi K."/>
            <person name="Semple C.A."/>
            <person name="Seno S."/>
            <person name="Sessa L."/>
            <person name="Sheng Y."/>
            <person name="Shibata Y."/>
            <person name="Shimada H."/>
            <person name="Shimada K."/>
            <person name="Silva D."/>
            <person name="Sinclair B."/>
            <person name="Sperling S."/>
            <person name="Stupka E."/>
            <person name="Sugiura K."/>
            <person name="Sultana R."/>
            <person name="Takenaka Y."/>
            <person name="Taki K."/>
            <person name="Tammoja K."/>
            <person name="Tan S.L."/>
            <person name="Tang S."/>
            <person name="Taylor M.S."/>
            <person name="Tegner J."/>
            <person name="Teichmann S.A."/>
            <person name="Ueda H.R."/>
            <person name="van Nimwegen E."/>
            <person name="Verardo R."/>
            <person name="Wei C.L."/>
            <person name="Yagi K."/>
            <person name="Yamanishi H."/>
            <person name="Zabarovsky E."/>
            <person name="Zhu S."/>
            <person name="Zimmer A."/>
            <person name="Hide W."/>
            <person name="Bult C."/>
            <person name="Grimmond S.M."/>
            <person name="Teasdale R.D."/>
            <person name="Liu E.T."/>
            <person name="Brusic V."/>
            <person name="Quackenbush J."/>
            <person name="Wahlestedt C."/>
            <person name="Mattick J.S."/>
            <person name="Hume D.A."/>
            <person name="Kai C."/>
            <person name="Sasaki D."/>
            <person name="Tomaru Y."/>
            <person name="Fukuda S."/>
            <person name="Kanamori-Katayama M."/>
            <person name="Suzuki M."/>
            <person name="Aoki J."/>
            <person name="Arakawa T."/>
            <person name="Iida J."/>
            <person name="Imamura K."/>
            <person name="Itoh M."/>
            <person name="Kato T."/>
            <person name="Kawaji H."/>
            <person name="Kawagashira N."/>
            <person name="Kawashima T."/>
            <person name="Kojima M."/>
            <person name="Kondo S."/>
            <person name="Konno H."/>
            <person name="Nakano K."/>
            <person name="Ninomiya N."/>
            <person name="Nishio T."/>
            <person name="Okada M."/>
            <person name="Plessy C."/>
            <person name="Shibata K."/>
            <person name="Shiraki T."/>
            <person name="Suzuki S."/>
            <person name="Tagami M."/>
            <person name="Waki K."/>
            <person name="Watahiki A."/>
            <person name="Okamura-Oho Y."/>
            <person name="Suzuki H."/>
            <person name="Kawai J."/>
            <person name="Hayashizaki Y."/>
        </authorList>
    </citation>
    <scope>NUCLEOTIDE SEQUENCE [LARGE SCALE MRNA]</scope>
    <source>
        <strain>C57BL/6J</strain>
    </source>
</reference>
<reference key="3">
    <citation type="journal article" date="2004" name="Genome Res.">
        <title>The status, quality, and expansion of the NIH full-length cDNA project: the Mammalian Gene Collection (MGC).</title>
        <authorList>
            <consortium name="The MGC Project Team"/>
        </authorList>
    </citation>
    <scope>NUCLEOTIDE SEQUENCE [LARGE SCALE MRNA]</scope>
    <source>
        <strain>C57BL/6J</strain>
        <tissue>Mammary gland</tissue>
    </source>
</reference>
<reference key="4">
    <citation type="journal article" date="2002" name="Mol. Cell. Biol.">
        <title>Intralysosomal cystine accumulation in mice lacking cystinosin, the protein defective in cystinosis.</title>
        <authorList>
            <person name="Cherqui S."/>
            <person name="Sevin C."/>
            <person name="Hamard G."/>
            <person name="Kalatzis V."/>
            <person name="Sich M."/>
            <person name="Pequignot M.O."/>
            <person name="Gogat K."/>
            <person name="Abitbol M."/>
            <person name="Broyer M."/>
            <person name="Gubler M.C."/>
            <person name="Antignac C."/>
        </authorList>
    </citation>
    <scope>FUNCTION</scope>
    <scope>SUBCELLULAR LOCATION</scope>
    <scope>DISRUPTION PHENOTYPE</scope>
</reference>
<reference key="5">
    <citation type="journal article" date="2009" name="Nat. Biotechnol.">
        <title>Mass-spectrometric identification and relative quantification of N-linked cell surface glycoproteins.</title>
        <authorList>
            <person name="Wollscheid B."/>
            <person name="Bausch-Fluck D."/>
            <person name="Henderson C."/>
            <person name="O'Brien R."/>
            <person name="Bibel M."/>
            <person name="Schiess R."/>
            <person name="Aebersold R."/>
            <person name="Watts J.D."/>
        </authorList>
    </citation>
    <scope>GLYCOSYLATION [LARGE SCALE ANALYSIS] AT ASN-66</scope>
</reference>
<reference key="6">
    <citation type="journal article" date="2009" name="Neurobiol. Aging">
        <title>Cystine accumulation in the CNS results in severe age-related memory deficits.</title>
        <authorList>
            <person name="Maurice T."/>
            <person name="Hippert C."/>
            <person name="Serratrice N."/>
            <person name="Dubois G."/>
            <person name="Jacquet C."/>
            <person name="Antignac C."/>
            <person name="Kremer E.J."/>
            <person name="Kalatzis V."/>
        </authorList>
    </citation>
    <scope>DISRUPTION PHENOTYPE</scope>
</reference>
<reference key="7">
    <citation type="journal article" date="2011" name="Mol. Vis.">
        <title>Quantitative in vivo and ex vivo confocal microscopy analysis of corneal cystine crystals in the Ctns knockout mouse.</title>
        <authorList>
            <person name="Simpson J."/>
            <person name="Nien C.J."/>
            <person name="Flynn K."/>
            <person name="Jester B."/>
            <person name="Cherqui S."/>
            <person name="Jester J."/>
        </authorList>
    </citation>
    <scope>DISRUPTION PHENOTYPE</scope>
</reference>
<reference key="8">
    <citation type="journal article" date="2012" name="FASEB J.">
        <title>Cystinosin is a melanosomal protein that regulates melanin synthesis.</title>
        <authorList>
            <person name="Chiaverini C."/>
            <person name="Sillard L."/>
            <person name="Flori E."/>
            <person name="Ito S."/>
            <person name="Briganti S."/>
            <person name="Wakamatsu K."/>
            <person name="Fontas E."/>
            <person name="Berard E."/>
            <person name="Cailliez M."/>
            <person name="Cochat P."/>
            <person name="Foulard M."/>
            <person name="Guest G."/>
            <person name="Niaudet P."/>
            <person name="Picardo M."/>
            <person name="Bernard F.X."/>
            <person name="Antignac C."/>
            <person name="Ortonne J.P."/>
            <person name="Ballotti R."/>
        </authorList>
    </citation>
    <scope>FUNCTION</scope>
    <scope>DISRUPTION PHENOTYPE</scope>
</reference>
<reference key="9">
    <citation type="journal article" date="2016" name="J. Am. Soc. Nephrol.">
        <title>Cystinosin is a component of the vacuolar H+-ATPase-Ragulator-Rag complex controlling mammalian target of rapamycin complex 1 signaling.</title>
        <authorList>
            <person name="Andrzejewska Z."/>
            <person name="Nevo N."/>
            <person name="Thomas L."/>
            <person name="Chhuon C."/>
            <person name="Bailleux A."/>
            <person name="Chauvet V."/>
            <person name="Courtoy P.J."/>
            <person name="Chol M."/>
            <person name="Guerrera I.C."/>
            <person name="Antignac C."/>
        </authorList>
    </citation>
    <scope>FUNCTION</scope>
    <scope>DISRUPTION PHENOTYPE</scope>
    <scope>INTERACTION WITH V-ATPASE AND RAGULATOR COMPLEXES</scope>
    <scope>INTERACTION WITH RRAGA AND RRAGC</scope>
    <scope>MUTAGENESIS OF LYS-280</scope>
</reference>
<reference key="10">
    <citation type="journal article" date="2017" name="J. Biol. Chem.">
        <title>Cystinosin, the small GTPase Rab11, and the Rab7 effector RILP regulate intracellular trafficking of the chaperone-mediated autophagy receptor LAMP2A.</title>
        <authorList>
            <person name="Zhang J."/>
            <person name="Johnson J.L."/>
            <person name="He J."/>
            <person name="Napolitano G."/>
            <person name="Ramadass M."/>
            <person name="Rocca C."/>
            <person name="Kiosses W.B."/>
            <person name="Bucci C."/>
            <person name="Xin Q."/>
            <person name="Gavathiotis E."/>
            <person name="Cuervo A.M."/>
            <person name="Cherqui S."/>
            <person name="Catz S.D."/>
        </authorList>
    </citation>
    <scope>FUNCTION</scope>
    <scope>MUTAGENESIS OF LYS-280</scope>
</reference>
<feature type="signal peptide" evidence="1">
    <location>
        <begin position="1"/>
        <end position="22"/>
    </location>
</feature>
<feature type="chain" id="PRO_0000205515" description="Cystinosin">
    <location>
        <begin position="23"/>
        <end position="367"/>
    </location>
</feature>
<feature type="topological domain" description="Lumenal" evidence="1">
    <location>
        <begin position="23"/>
        <end position="125"/>
    </location>
</feature>
<feature type="transmembrane region" description="Helical" evidence="1">
    <location>
        <begin position="126"/>
        <end position="150"/>
    </location>
</feature>
<feature type="topological domain" description="Cytoplasmic" evidence="1">
    <location>
        <begin position="151"/>
        <end position="159"/>
    </location>
</feature>
<feature type="transmembrane region" description="Helical" evidence="1">
    <location>
        <begin position="160"/>
        <end position="179"/>
    </location>
</feature>
<feature type="topological domain" description="Lumenal" evidence="1 11">
    <location>
        <begin position="180"/>
        <end position="202"/>
    </location>
</feature>
<feature type="transmembrane region" description="Helical" evidence="1">
    <location>
        <begin position="203"/>
        <end position="225"/>
    </location>
</feature>
<feature type="topological domain" description="Cytoplasmic" evidence="1">
    <location>
        <begin position="226"/>
        <end position="234"/>
    </location>
</feature>
<feature type="transmembrane region" description="Helical" evidence="1">
    <location>
        <begin position="235"/>
        <end position="257"/>
    </location>
</feature>
<feature type="topological domain" description="Lumenal" evidence="1 11">
    <location>
        <begin position="258"/>
        <end position="263"/>
    </location>
</feature>
<feature type="transmembrane region" description="Helical" evidence="1">
    <location>
        <begin position="264"/>
        <end position="289"/>
    </location>
</feature>
<feature type="topological domain" description="Cytoplasmic" evidence="1">
    <location>
        <begin position="290"/>
        <end position="298"/>
    </location>
</feature>
<feature type="transmembrane region" description="Helical" evidence="1">
    <location>
        <begin position="299"/>
        <end position="308"/>
    </location>
</feature>
<feature type="topological domain" description="Lumenal" evidence="1">
    <location>
        <begin position="309"/>
        <end position="331"/>
    </location>
</feature>
<feature type="transmembrane region" description="Helical" evidence="1">
    <location>
        <begin position="332"/>
        <end position="354"/>
    </location>
</feature>
<feature type="topological domain" description="Cytoplasmic" evidence="1">
    <location>
        <begin position="355"/>
        <end position="367"/>
    </location>
</feature>
<feature type="domain" description="PQ-loop 1">
    <location>
        <begin position="123"/>
        <end position="189"/>
    </location>
</feature>
<feature type="domain" description="PQ-loop 2">
    <location>
        <begin position="263"/>
        <end position="328"/>
    </location>
</feature>
<feature type="short sequence motif" description="Lysosomal targeting motif" evidence="2">
    <location>
        <begin position="362"/>
        <end position="366"/>
    </location>
</feature>
<feature type="binding site" evidence="1">
    <location>
        <position position="166"/>
    </location>
    <ligand>
        <name>L-cystine</name>
        <dbReference type="ChEBI" id="CHEBI:35491"/>
    </ligand>
</feature>
<feature type="binding site" evidence="1">
    <location>
        <position position="205"/>
    </location>
    <ligand>
        <name>H(+)</name>
        <dbReference type="ChEBI" id="CHEBI:15378"/>
    </ligand>
</feature>
<feature type="binding site" evidence="1">
    <location>
        <position position="273"/>
    </location>
    <ligand>
        <name>L-cystine</name>
        <dbReference type="ChEBI" id="CHEBI:35491"/>
    </ligand>
</feature>
<feature type="binding site" evidence="1">
    <location>
        <position position="280"/>
    </location>
    <ligand>
        <name>L-cystine</name>
        <dbReference type="ChEBI" id="CHEBI:35491"/>
    </ligand>
</feature>
<feature type="binding site" evidence="1">
    <location>
        <position position="281"/>
    </location>
    <ligand>
        <name>L-cystine</name>
        <dbReference type="ChEBI" id="CHEBI:35491"/>
    </ligand>
</feature>
<feature type="binding site" description="protonated residue following cystine-binding" evidence="1">
    <location>
        <position position="305"/>
    </location>
    <ligand>
        <name>H(+)</name>
        <dbReference type="ChEBI" id="CHEBI:15378"/>
    </ligand>
</feature>
<feature type="binding site" evidence="1">
    <location>
        <position position="305"/>
    </location>
    <ligand>
        <name>L-cystine</name>
        <dbReference type="ChEBI" id="CHEBI:35491"/>
    </ligand>
</feature>
<feature type="binding site" evidence="1">
    <location>
        <position position="346"/>
    </location>
    <ligand>
        <name>H(+)</name>
        <dbReference type="ChEBI" id="CHEBI:15378"/>
    </ligand>
</feature>
<feature type="glycosylation site" description="N-linked (GlcNAc...) asparagine" evidence="2">
    <location>
        <position position="36"/>
    </location>
</feature>
<feature type="glycosylation site" description="N-linked (GlcNAc...) asparagine" evidence="2">
    <location>
        <position position="51"/>
    </location>
</feature>
<feature type="glycosylation site" description="N-linked (GlcNAc...) asparagine" evidence="5">
    <location>
        <position position="66"/>
    </location>
</feature>
<feature type="glycosylation site" description="N-linked (GlcNAc...) asparagine" evidence="2">
    <location>
        <position position="84"/>
    </location>
</feature>
<feature type="glycosylation site" description="N-linked (GlcNAc...) asparagine" evidence="2">
    <location>
        <position position="104"/>
    </location>
</feature>
<feature type="glycosylation site" description="N-linked (GlcNAc...) asparagine" evidence="2">
    <location>
        <position position="107"/>
    </location>
</feature>
<feature type="mutagenesis site" description="Abolished cystine transport. Abolished interaction with components of the v-ATPase and Ragulator complexes. Does not affect ability to lysosomal localization of LAMP2A." evidence="8 9">
    <original>K</original>
    <variation>R</variation>
    <location>
        <position position="280"/>
    </location>
</feature>